<dbReference type="EC" id="3.4.11.-"/>
<dbReference type="EMBL" id="X89081">
    <property type="protein sequence ID" value="CAA61452.1"/>
    <property type="molecule type" value="mRNA"/>
</dbReference>
<dbReference type="EMBL" id="AB007039">
    <property type="protein sequence ID" value="BAA32476.1"/>
    <property type="molecule type" value="Genomic_DNA"/>
</dbReference>
<dbReference type="SMR" id="Q11001"/>
<dbReference type="MEROPS" id="M01.013"/>
<dbReference type="OrthoDB" id="10031169at2759"/>
<dbReference type="GO" id="GO:0005737">
    <property type="term" value="C:cytoplasm"/>
    <property type="evidence" value="ECO:0007669"/>
    <property type="project" value="TreeGrafter"/>
</dbReference>
<dbReference type="GO" id="GO:0005615">
    <property type="term" value="C:extracellular space"/>
    <property type="evidence" value="ECO:0007669"/>
    <property type="project" value="TreeGrafter"/>
</dbReference>
<dbReference type="GO" id="GO:0005886">
    <property type="term" value="C:plasma membrane"/>
    <property type="evidence" value="ECO:0007669"/>
    <property type="project" value="UniProtKB-SubCell"/>
</dbReference>
<dbReference type="GO" id="GO:0098552">
    <property type="term" value="C:side of membrane"/>
    <property type="evidence" value="ECO:0007669"/>
    <property type="project" value="UniProtKB-KW"/>
</dbReference>
<dbReference type="GO" id="GO:0070006">
    <property type="term" value="F:metalloaminopeptidase activity"/>
    <property type="evidence" value="ECO:0007669"/>
    <property type="project" value="TreeGrafter"/>
</dbReference>
<dbReference type="GO" id="GO:0042277">
    <property type="term" value="F:peptide binding"/>
    <property type="evidence" value="ECO:0007669"/>
    <property type="project" value="TreeGrafter"/>
</dbReference>
<dbReference type="GO" id="GO:0008270">
    <property type="term" value="F:zinc ion binding"/>
    <property type="evidence" value="ECO:0007669"/>
    <property type="project" value="InterPro"/>
</dbReference>
<dbReference type="GO" id="GO:0043171">
    <property type="term" value="P:peptide catabolic process"/>
    <property type="evidence" value="ECO:0007669"/>
    <property type="project" value="TreeGrafter"/>
</dbReference>
<dbReference type="GO" id="GO:0006508">
    <property type="term" value="P:proteolysis"/>
    <property type="evidence" value="ECO:0007669"/>
    <property type="project" value="UniProtKB-KW"/>
</dbReference>
<dbReference type="CDD" id="cd09601">
    <property type="entry name" value="M1_APN-Q_like"/>
    <property type="match status" value="1"/>
</dbReference>
<dbReference type="FunFam" id="2.60.40.1730:FF:000013">
    <property type="entry name" value="Aminopeptidase"/>
    <property type="match status" value="1"/>
</dbReference>
<dbReference type="FunFam" id="1.10.390.10:FF:000006">
    <property type="entry name" value="Puromycin-sensitive aminopeptidase"/>
    <property type="match status" value="1"/>
</dbReference>
<dbReference type="Gene3D" id="1.25.50.20">
    <property type="match status" value="1"/>
</dbReference>
<dbReference type="Gene3D" id="2.60.40.1910">
    <property type="match status" value="1"/>
</dbReference>
<dbReference type="Gene3D" id="1.10.390.10">
    <property type="entry name" value="Neutral Protease Domain 2"/>
    <property type="match status" value="1"/>
</dbReference>
<dbReference type="Gene3D" id="2.60.40.1730">
    <property type="entry name" value="tricorn interacting facor f3 domain"/>
    <property type="match status" value="1"/>
</dbReference>
<dbReference type="InterPro" id="IPR045357">
    <property type="entry name" value="Aminopeptidase_N-like_N"/>
</dbReference>
<dbReference type="InterPro" id="IPR042097">
    <property type="entry name" value="Aminopeptidase_N-like_N_sf"/>
</dbReference>
<dbReference type="InterPro" id="IPR024571">
    <property type="entry name" value="ERAP1-like_C_dom"/>
</dbReference>
<dbReference type="InterPro" id="IPR034016">
    <property type="entry name" value="M1_APN-typ"/>
</dbReference>
<dbReference type="InterPro" id="IPR001930">
    <property type="entry name" value="Peptidase_M1"/>
</dbReference>
<dbReference type="InterPro" id="IPR050344">
    <property type="entry name" value="Peptidase_M1_aminopeptidases"/>
</dbReference>
<dbReference type="InterPro" id="IPR014782">
    <property type="entry name" value="Peptidase_M1_dom"/>
</dbReference>
<dbReference type="InterPro" id="IPR027268">
    <property type="entry name" value="Peptidase_M4/M1_CTD_sf"/>
</dbReference>
<dbReference type="PANTHER" id="PTHR11533:SF301">
    <property type="entry name" value="AMINOPEPTIDASE"/>
    <property type="match status" value="1"/>
</dbReference>
<dbReference type="PANTHER" id="PTHR11533">
    <property type="entry name" value="PROTEASE M1 ZINC METALLOPROTEASE"/>
    <property type="match status" value="1"/>
</dbReference>
<dbReference type="Pfam" id="PF11838">
    <property type="entry name" value="ERAP1_C"/>
    <property type="match status" value="1"/>
</dbReference>
<dbReference type="Pfam" id="PF01433">
    <property type="entry name" value="Peptidase_M1"/>
    <property type="match status" value="1"/>
</dbReference>
<dbReference type="Pfam" id="PF17900">
    <property type="entry name" value="Peptidase_M1_N"/>
    <property type="match status" value="1"/>
</dbReference>
<dbReference type="PRINTS" id="PR00756">
    <property type="entry name" value="ALADIPTASE"/>
</dbReference>
<dbReference type="SUPFAM" id="SSF63737">
    <property type="entry name" value="Leukotriene A4 hydrolase N-terminal domain"/>
    <property type="match status" value="1"/>
</dbReference>
<dbReference type="SUPFAM" id="SSF55486">
    <property type="entry name" value="Metalloproteases ('zincins'), catalytic domain"/>
    <property type="match status" value="1"/>
</dbReference>
<dbReference type="PROSITE" id="PS00142">
    <property type="entry name" value="ZINC_PROTEASE"/>
    <property type="match status" value="1"/>
</dbReference>
<proteinExistence type="evidence at protein level"/>
<organism>
    <name type="scientific">Manduca sexta</name>
    <name type="common">Tobacco hawkmoth</name>
    <name type="synonym">Tobacco hornworm</name>
    <dbReference type="NCBI Taxonomy" id="7130"/>
    <lineage>
        <taxon>Eukaryota</taxon>
        <taxon>Metazoa</taxon>
        <taxon>Ecdysozoa</taxon>
        <taxon>Arthropoda</taxon>
        <taxon>Hexapoda</taxon>
        <taxon>Insecta</taxon>
        <taxon>Pterygota</taxon>
        <taxon>Neoptera</taxon>
        <taxon>Endopterygota</taxon>
        <taxon>Lepidoptera</taxon>
        <taxon>Glossata</taxon>
        <taxon>Ditrysia</taxon>
        <taxon>Bombycoidea</taxon>
        <taxon>Sphingidae</taxon>
        <taxon>Sphinginae</taxon>
        <taxon>Sphingini</taxon>
        <taxon>Manduca</taxon>
    </lineage>
</organism>
<keyword id="KW-0031">Aminopeptidase</keyword>
<keyword id="KW-1003">Cell membrane</keyword>
<keyword id="KW-0903">Direct protein sequencing</keyword>
<keyword id="KW-0325">Glycoprotein</keyword>
<keyword id="KW-0336">GPI-anchor</keyword>
<keyword id="KW-0378">Hydrolase</keyword>
<keyword id="KW-0449">Lipoprotein</keyword>
<keyword id="KW-0472">Membrane</keyword>
<keyword id="KW-0479">Metal-binding</keyword>
<keyword id="KW-0482">Metalloprotease</keyword>
<keyword id="KW-0645">Protease</keyword>
<keyword id="KW-0732">Signal</keyword>
<keyword id="KW-0862">Zinc</keyword>
<sequence>FTIFLGVALLQGVLTLSPIPVPEEEWAEFSRMLRDPSYRLPTTTRPRHYAVTLTPYFDVVPAGVSGLTTFSFDGEVTIYISPTQANVNEIVLHCNDLTIQSLRVTYVSGNSEVDITATGQTFTCEMPYSFLRIRTSTPLVMNQEYIIRSTFRGNLQTNMRGFYRSWYVDRTGKRWMATTQFQPGHARQAFPCYDEPGFKATFDITMNREADFSPTISNMPIRATTTLTNGRISETFFTTPLTSTYLLAFIVSHYQVISNNNNAARPFRIYARNNVGSQGDWSLEMGEKLLLAMENYTAIPYYTMAQNLDMKQAAIPDFSAGAMENWGLLTYREALILYDPLNSNHHYRQRVANIVSHEIAHMWFGNLVTCAWWDNLWLNEGFARFSQYYLTATVDPELGYEIRFIPEQLQVAMFSDSVDSAHALTDTSVNDPVAVSAHFSTITYARGAAILRMTQHLLSYDTFVKGLRQYLRARQFDVAEPYHLFSALDAAAAEDNALAAYRGITIDAYFRTWSEKAGHPLLSVTVDHESGRMTLVQARWERNTGVSRFPGLWHIPITWTRAGAPDFENLKPSQVMTGQSLVIDRGTRGQEWVIFNKQVSGFYRVNYDNTTWGLITRALRSANRTVIHELSRSQIVDDVFQLARSGVMSYQRALNILSYLRFEDAYAPWLSAISGFNWVIRRFAHDAANLQTLQNQIIGLSEAVVARLGFTEVSGGTYMTDLQRLHVMQFLCNVGHQQCIDAGRQNFLNWRNGSFIPANMRPWVYCTGLRYGSAEDFNYFWNRYIVEDLSNEKVVMLEAAGCTRDQASLEKFLNAIVSGNDDVRPQDHSSALSSAITSNDVNTMRAFDWLTKNVDQITRTLGSITSPLNTITSRLLTEAQMTQVQTWLDANRNTIGAAYNTGVNGIATSRANLQWSANRMSEFLRFFETGFVDDVPSEATTVAPPAETTVTPSTFPPTVAPATTPAPGSGNIAALSVVSLLVTLAINMVA</sequence>
<evidence type="ECO:0000250" key="1"/>
<evidence type="ECO:0000255" key="2"/>
<evidence type="ECO:0000255" key="3">
    <source>
        <dbReference type="PROSITE-ProRule" id="PRU10095"/>
    </source>
</evidence>
<evidence type="ECO:0000305" key="4"/>
<feature type="signal peptide" evidence="2">
    <location>
        <begin position="1" status="less than"/>
        <end position="15"/>
    </location>
</feature>
<feature type="propeptide" id="PRO_0000026748" description="Activation peptide" evidence="1">
    <location>
        <begin position="16"/>
        <end position="35"/>
    </location>
</feature>
<feature type="chain" id="PRO_0000026749" description="Membrane alanyl aminopeptidase">
    <location>
        <begin position="36"/>
        <end position="968"/>
    </location>
</feature>
<feature type="propeptide" id="PRO_0000026750" description="Removed in mature form" evidence="2">
    <location>
        <begin position="969"/>
        <end position="990"/>
    </location>
</feature>
<feature type="active site" description="Proton acceptor" evidence="3">
    <location>
        <position position="358"/>
    </location>
</feature>
<feature type="binding site" evidence="1">
    <location>
        <begin position="321"/>
        <end position="325"/>
    </location>
    <ligand>
        <name>substrate</name>
    </ligand>
</feature>
<feature type="binding site" evidence="3">
    <location>
        <position position="357"/>
    </location>
    <ligand>
        <name>Zn(2+)</name>
        <dbReference type="ChEBI" id="CHEBI:29105"/>
        <note>catalytic</note>
    </ligand>
</feature>
<feature type="binding site" evidence="3">
    <location>
        <position position="361"/>
    </location>
    <ligand>
        <name>Zn(2+)</name>
        <dbReference type="ChEBI" id="CHEBI:29105"/>
        <note>catalytic</note>
    </ligand>
</feature>
<feature type="binding site" evidence="3">
    <location>
        <position position="380"/>
    </location>
    <ligand>
        <name>Zn(2+)</name>
        <dbReference type="ChEBI" id="CHEBI:29105"/>
        <note>catalytic</note>
    </ligand>
</feature>
<feature type="site" description="Transition state stabilizer" evidence="1">
    <location>
        <position position="444"/>
    </location>
</feature>
<feature type="lipid moiety-binding region" description="GPI-anchor amidated glycine" evidence="2">
    <location>
        <position position="968"/>
    </location>
</feature>
<feature type="glycosylation site" description="N-linked (GlcNAc...) asparagine" evidence="2">
    <location>
        <position position="295"/>
    </location>
</feature>
<feature type="glycosylation site" description="N-linked (GlcNAc...) asparagine" evidence="2">
    <location>
        <position position="609"/>
    </location>
</feature>
<feature type="glycosylation site" description="N-linked (GlcNAc...) asparagine" evidence="2">
    <location>
        <position position="623"/>
    </location>
</feature>
<feature type="glycosylation site" description="N-linked (GlcNAc...) asparagine" evidence="2">
    <location>
        <position position="752"/>
    </location>
</feature>
<feature type="non-terminal residue">
    <location>
        <position position="1"/>
    </location>
</feature>
<comment type="function">
    <text>Binds to the B.thuringiensis toxin, CryIA(C).</text>
</comment>
<comment type="cofactor">
    <cofactor evidence="1">
        <name>Zn(2+)</name>
        <dbReference type="ChEBI" id="CHEBI:29105"/>
    </cofactor>
    <text evidence="1">Binds 1 zinc ion per subunit.</text>
</comment>
<comment type="subcellular location">
    <subcellularLocation>
        <location>Cell membrane</location>
        <topology>Lipid-anchor</topology>
        <topology>GPI-anchor</topology>
    </subcellularLocation>
</comment>
<comment type="tissue specificity">
    <text>Midgut brush-border membrane.</text>
</comment>
<comment type="similarity">
    <text evidence="4">Belongs to the peptidase M1 family.</text>
</comment>
<reference key="1">
    <citation type="journal article" date="1995" name="J. Biol. Chem.">
        <title>Molecular cloning of an insect aminopeptidase N that serves as a receptor for Bacillus thuringiensis CryIA(c) toxin.</title>
        <authorList>
            <person name="Knight P.J.K."/>
            <person name="Knowles B.H."/>
            <person name="Ellar D.J."/>
        </authorList>
    </citation>
    <scope>NUCLEOTIDE SEQUENCE [MRNA]</scope>
    <scope>PARTIAL PROTEIN SEQUENCE</scope>
    <source>
        <tissue>Midgut</tissue>
    </source>
</reference>
<accession>Q11001</accession>
<name>AMPM_MANSE</name>
<protein>
    <recommendedName>
        <fullName>Membrane alanyl aminopeptidase</fullName>
        <ecNumber>3.4.11.-</ecNumber>
    </recommendedName>
    <alternativeName>
        <fullName>Aminopeptidase N-like protein</fullName>
    </alternativeName>
    <alternativeName>
        <fullName>CryIA(C) receptor</fullName>
    </alternativeName>
</protein>